<name>CCA_SALA4</name>
<dbReference type="EC" id="2.7.7.72" evidence="1"/>
<dbReference type="EC" id="3.1.3.-" evidence="1"/>
<dbReference type="EC" id="3.1.4.-" evidence="1"/>
<dbReference type="EMBL" id="CP001138">
    <property type="protein sequence ID" value="ACH51083.1"/>
    <property type="molecule type" value="Genomic_DNA"/>
</dbReference>
<dbReference type="RefSeq" id="WP_000708447.1">
    <property type="nucleotide sequence ID" value="NC_011149.1"/>
</dbReference>
<dbReference type="SMR" id="B5F6A0"/>
<dbReference type="KEGG" id="sea:SeAg_B3390"/>
<dbReference type="HOGENOM" id="CLU_015961_1_1_6"/>
<dbReference type="Proteomes" id="UP000008819">
    <property type="component" value="Chromosome"/>
</dbReference>
<dbReference type="GO" id="GO:0005524">
    <property type="term" value="F:ATP binding"/>
    <property type="evidence" value="ECO:0007669"/>
    <property type="project" value="UniProtKB-UniRule"/>
</dbReference>
<dbReference type="GO" id="GO:0004810">
    <property type="term" value="F:CCA tRNA nucleotidyltransferase activity"/>
    <property type="evidence" value="ECO:0007669"/>
    <property type="project" value="UniProtKB-UniRule"/>
</dbReference>
<dbReference type="GO" id="GO:0004112">
    <property type="term" value="F:cyclic-nucleotide phosphodiesterase activity"/>
    <property type="evidence" value="ECO:0007669"/>
    <property type="project" value="UniProtKB-UniRule"/>
</dbReference>
<dbReference type="GO" id="GO:0000287">
    <property type="term" value="F:magnesium ion binding"/>
    <property type="evidence" value="ECO:0007669"/>
    <property type="project" value="UniProtKB-UniRule"/>
</dbReference>
<dbReference type="GO" id="GO:0016791">
    <property type="term" value="F:phosphatase activity"/>
    <property type="evidence" value="ECO:0007669"/>
    <property type="project" value="UniProtKB-UniRule"/>
</dbReference>
<dbReference type="GO" id="GO:0000049">
    <property type="term" value="F:tRNA binding"/>
    <property type="evidence" value="ECO:0007669"/>
    <property type="project" value="UniProtKB-UniRule"/>
</dbReference>
<dbReference type="GO" id="GO:0042245">
    <property type="term" value="P:RNA repair"/>
    <property type="evidence" value="ECO:0007669"/>
    <property type="project" value="UniProtKB-KW"/>
</dbReference>
<dbReference type="GO" id="GO:0001680">
    <property type="term" value="P:tRNA 3'-terminal CCA addition"/>
    <property type="evidence" value="ECO:0007669"/>
    <property type="project" value="UniProtKB-UniRule"/>
</dbReference>
<dbReference type="CDD" id="cd00077">
    <property type="entry name" value="HDc"/>
    <property type="match status" value="1"/>
</dbReference>
<dbReference type="CDD" id="cd05398">
    <property type="entry name" value="NT_ClassII-CCAase"/>
    <property type="match status" value="1"/>
</dbReference>
<dbReference type="FunFam" id="1.10.3090.10:FF:000001">
    <property type="entry name" value="Multifunctional CCA protein"/>
    <property type="match status" value="1"/>
</dbReference>
<dbReference type="FunFam" id="3.30.460.10:FF:000016">
    <property type="entry name" value="Multifunctional CCA protein"/>
    <property type="match status" value="1"/>
</dbReference>
<dbReference type="Gene3D" id="3.30.460.10">
    <property type="entry name" value="Beta Polymerase, domain 2"/>
    <property type="match status" value="1"/>
</dbReference>
<dbReference type="Gene3D" id="1.10.3090.10">
    <property type="entry name" value="cca-adding enzyme, domain 2"/>
    <property type="match status" value="1"/>
</dbReference>
<dbReference type="HAMAP" id="MF_01261">
    <property type="entry name" value="CCA_bact_type1"/>
    <property type="match status" value="1"/>
</dbReference>
<dbReference type="HAMAP" id="MF_01262">
    <property type="entry name" value="CCA_bact_type2"/>
    <property type="match status" value="1"/>
</dbReference>
<dbReference type="InterPro" id="IPR012006">
    <property type="entry name" value="CCA_bact"/>
</dbReference>
<dbReference type="InterPro" id="IPR003607">
    <property type="entry name" value="HD/PDEase_dom"/>
</dbReference>
<dbReference type="InterPro" id="IPR006674">
    <property type="entry name" value="HD_domain"/>
</dbReference>
<dbReference type="InterPro" id="IPR043519">
    <property type="entry name" value="NT_sf"/>
</dbReference>
<dbReference type="InterPro" id="IPR002646">
    <property type="entry name" value="PolA_pol_head_dom"/>
</dbReference>
<dbReference type="InterPro" id="IPR032828">
    <property type="entry name" value="PolyA_RNA-bd"/>
</dbReference>
<dbReference type="InterPro" id="IPR050124">
    <property type="entry name" value="tRNA_CCA-adding_enzyme"/>
</dbReference>
<dbReference type="NCBIfam" id="NF008137">
    <property type="entry name" value="PRK10885.1"/>
    <property type="match status" value="1"/>
</dbReference>
<dbReference type="PANTHER" id="PTHR47545">
    <property type="entry name" value="MULTIFUNCTIONAL CCA PROTEIN"/>
    <property type="match status" value="1"/>
</dbReference>
<dbReference type="PANTHER" id="PTHR47545:SF1">
    <property type="entry name" value="MULTIFUNCTIONAL CCA PROTEIN"/>
    <property type="match status" value="1"/>
</dbReference>
<dbReference type="Pfam" id="PF01966">
    <property type="entry name" value="HD"/>
    <property type="match status" value="1"/>
</dbReference>
<dbReference type="Pfam" id="PF01743">
    <property type="entry name" value="PolyA_pol"/>
    <property type="match status" value="1"/>
</dbReference>
<dbReference type="Pfam" id="PF12627">
    <property type="entry name" value="PolyA_pol_RNAbd"/>
    <property type="match status" value="1"/>
</dbReference>
<dbReference type="PIRSF" id="PIRSF000813">
    <property type="entry name" value="CCA_bact"/>
    <property type="match status" value="1"/>
</dbReference>
<dbReference type="SMART" id="SM00471">
    <property type="entry name" value="HDc"/>
    <property type="match status" value="1"/>
</dbReference>
<dbReference type="SUPFAM" id="SSF81301">
    <property type="entry name" value="Nucleotidyltransferase"/>
    <property type="match status" value="1"/>
</dbReference>
<dbReference type="SUPFAM" id="SSF81891">
    <property type="entry name" value="Poly A polymerase C-terminal region-like"/>
    <property type="match status" value="1"/>
</dbReference>
<dbReference type="PROSITE" id="PS51831">
    <property type="entry name" value="HD"/>
    <property type="match status" value="1"/>
</dbReference>
<reference key="1">
    <citation type="journal article" date="2011" name="J. Bacteriol.">
        <title>Comparative genomics of 28 Salmonella enterica isolates: evidence for CRISPR-mediated adaptive sublineage evolution.</title>
        <authorList>
            <person name="Fricke W.F."/>
            <person name="Mammel M.K."/>
            <person name="McDermott P.F."/>
            <person name="Tartera C."/>
            <person name="White D.G."/>
            <person name="Leclerc J.E."/>
            <person name="Ravel J."/>
            <person name="Cebula T.A."/>
        </authorList>
    </citation>
    <scope>NUCLEOTIDE SEQUENCE [LARGE SCALE GENOMIC DNA]</scope>
    <source>
        <strain>SL483</strain>
    </source>
</reference>
<sequence>MKIYLVGGAVRDALLGLPVKDKDWVVVGATPQEMLDAGYQQVGRDFPVFLHPQTHEEYALARTERKSGSGYTGFTCYAAPDVTLEADLQRRDLTINALARDDDGQIIDPYHGRRDLEARLLRHVSPAFGEDPLRVLRVARFAARYAHLSFRIADETLALMREMTAAGELEHLTPERVWKETENALTTRNPQVYFQVLRDCGALRVLFPEIDALFGVPAPAKWHPEIDTGVHTLMTLSMAAMLSPQLDVRFATLCHDLGKGLTPKNLWPRHHGHGPAGVKLVEQLCQRLRVPNDLRDLAKLVAEYHDLIHTFPILQPKTIVKLFDAIDAWRKPQRVEQIALTSEADVRGRTGFEASDYPQGRWLREAWQVAQAVPTKEVVEAGFKGIEIREELTKRRIAAVANWKEKRCPNPAS</sequence>
<comment type="function">
    <text evidence="1">Catalyzes the addition and repair of the essential 3'-terminal CCA sequence in tRNAs without using a nucleic acid template. Adds these three nucleotides in the order of C, C, and A to the tRNA nucleotide-73, using CTP and ATP as substrates and producing inorganic pyrophosphate. tRNA 3'-terminal CCA addition is required both for tRNA processing and repair. Also involved in tRNA surveillance by mediating tandem CCA addition to generate a CCACCA at the 3' terminus of unstable tRNAs. While stable tRNAs receive only 3'-terminal CCA, unstable tRNAs are marked with CCACCA and rapidly degraded.</text>
</comment>
<comment type="catalytic activity">
    <reaction evidence="1">
        <text>a tRNA precursor + 2 CTP + ATP = a tRNA with a 3' CCA end + 3 diphosphate</text>
        <dbReference type="Rhea" id="RHEA:14433"/>
        <dbReference type="Rhea" id="RHEA-COMP:10465"/>
        <dbReference type="Rhea" id="RHEA-COMP:10468"/>
        <dbReference type="ChEBI" id="CHEBI:30616"/>
        <dbReference type="ChEBI" id="CHEBI:33019"/>
        <dbReference type="ChEBI" id="CHEBI:37563"/>
        <dbReference type="ChEBI" id="CHEBI:74896"/>
        <dbReference type="ChEBI" id="CHEBI:83071"/>
        <dbReference type="EC" id="2.7.7.72"/>
    </reaction>
</comment>
<comment type="catalytic activity">
    <reaction evidence="1">
        <text>a tRNA with a 3' CCA end + 2 CTP + ATP = a tRNA with a 3' CCACCA end + 3 diphosphate</text>
        <dbReference type="Rhea" id="RHEA:76235"/>
        <dbReference type="Rhea" id="RHEA-COMP:10468"/>
        <dbReference type="Rhea" id="RHEA-COMP:18655"/>
        <dbReference type="ChEBI" id="CHEBI:30616"/>
        <dbReference type="ChEBI" id="CHEBI:33019"/>
        <dbReference type="ChEBI" id="CHEBI:37563"/>
        <dbReference type="ChEBI" id="CHEBI:83071"/>
        <dbReference type="ChEBI" id="CHEBI:195187"/>
    </reaction>
    <physiologicalReaction direction="left-to-right" evidence="1">
        <dbReference type="Rhea" id="RHEA:76236"/>
    </physiologicalReaction>
</comment>
<comment type="cofactor">
    <cofactor evidence="1">
        <name>Mg(2+)</name>
        <dbReference type="ChEBI" id="CHEBI:18420"/>
    </cofactor>
    <text evidence="1">Magnesium is required for nucleotidyltransferase activity.</text>
</comment>
<comment type="cofactor">
    <cofactor evidence="1">
        <name>Ni(2+)</name>
        <dbReference type="ChEBI" id="CHEBI:49786"/>
    </cofactor>
    <text evidence="1">Nickel for phosphatase activity.</text>
</comment>
<comment type="subunit">
    <text evidence="1">Monomer. Can also form homodimers and oligomers.</text>
</comment>
<comment type="domain">
    <text evidence="1">Comprises two domains: an N-terminal domain containing the nucleotidyltransferase activity and a C-terminal HD domain associated with both phosphodiesterase and phosphatase activities.</text>
</comment>
<comment type="miscellaneous">
    <text evidence="1">A single active site specifically recognizes both ATP and CTP and is responsible for their addition.</text>
</comment>
<comment type="similarity">
    <text evidence="1">Belongs to the tRNA nucleotidyltransferase/poly(A) polymerase family. Bacterial CCA-adding enzyme type 1 subfamily.</text>
</comment>
<protein>
    <recommendedName>
        <fullName evidence="1">Multifunctional CCA protein</fullName>
    </recommendedName>
    <domain>
        <recommendedName>
            <fullName evidence="1">CCA-adding enzyme</fullName>
            <ecNumber evidence="1">2.7.7.72</ecNumber>
        </recommendedName>
        <alternativeName>
            <fullName evidence="1">CCA tRNA nucleotidyltransferase</fullName>
        </alternativeName>
        <alternativeName>
            <fullName evidence="1">tRNA CCA-pyrophosphorylase</fullName>
        </alternativeName>
        <alternativeName>
            <fullName evidence="1">tRNA adenylyl-/cytidylyl-transferase</fullName>
        </alternativeName>
        <alternativeName>
            <fullName evidence="1">tRNA nucleotidyltransferase</fullName>
        </alternativeName>
        <alternativeName>
            <fullName evidence="1">tRNA-NT</fullName>
        </alternativeName>
    </domain>
    <domain>
        <recommendedName>
            <fullName evidence="1">2'-nucleotidase</fullName>
            <ecNumber evidence="1">3.1.3.-</ecNumber>
        </recommendedName>
    </domain>
    <domain>
        <recommendedName>
            <fullName evidence="1">2',3'-cyclic phosphodiesterase</fullName>
            <ecNumber evidence="1">3.1.4.-</ecNumber>
        </recommendedName>
    </domain>
    <domain>
        <recommendedName>
            <fullName evidence="1">Phosphatase</fullName>
            <ecNumber evidence="1">3.1.3.-</ecNumber>
        </recommendedName>
    </domain>
</protein>
<gene>
    <name evidence="1" type="primary">cca</name>
    <name type="ordered locus">SeAg_B3390</name>
</gene>
<keyword id="KW-0067">ATP-binding</keyword>
<keyword id="KW-0378">Hydrolase</keyword>
<keyword id="KW-0460">Magnesium</keyword>
<keyword id="KW-0479">Metal-binding</keyword>
<keyword id="KW-0511">Multifunctional enzyme</keyword>
<keyword id="KW-0533">Nickel</keyword>
<keyword id="KW-0547">Nucleotide-binding</keyword>
<keyword id="KW-0548">Nucleotidyltransferase</keyword>
<keyword id="KW-0692">RNA repair</keyword>
<keyword id="KW-0694">RNA-binding</keyword>
<keyword id="KW-0808">Transferase</keyword>
<keyword id="KW-0819">tRNA processing</keyword>
<feature type="chain" id="PRO_1000140045" description="Multifunctional CCA protein">
    <location>
        <begin position="1"/>
        <end position="413"/>
    </location>
</feature>
<feature type="domain" description="HD" evidence="1">
    <location>
        <begin position="228"/>
        <end position="329"/>
    </location>
</feature>
<feature type="binding site" evidence="1">
    <location>
        <position position="8"/>
    </location>
    <ligand>
        <name>ATP</name>
        <dbReference type="ChEBI" id="CHEBI:30616"/>
    </ligand>
</feature>
<feature type="binding site" evidence="1">
    <location>
        <position position="8"/>
    </location>
    <ligand>
        <name>CTP</name>
        <dbReference type="ChEBI" id="CHEBI:37563"/>
    </ligand>
</feature>
<feature type="binding site" evidence="1">
    <location>
        <position position="11"/>
    </location>
    <ligand>
        <name>ATP</name>
        <dbReference type="ChEBI" id="CHEBI:30616"/>
    </ligand>
</feature>
<feature type="binding site" evidence="1">
    <location>
        <position position="11"/>
    </location>
    <ligand>
        <name>CTP</name>
        <dbReference type="ChEBI" id="CHEBI:37563"/>
    </ligand>
</feature>
<feature type="binding site" evidence="1">
    <location>
        <position position="21"/>
    </location>
    <ligand>
        <name>Mg(2+)</name>
        <dbReference type="ChEBI" id="CHEBI:18420"/>
    </ligand>
</feature>
<feature type="binding site" evidence="1">
    <location>
        <position position="23"/>
    </location>
    <ligand>
        <name>Mg(2+)</name>
        <dbReference type="ChEBI" id="CHEBI:18420"/>
    </ligand>
</feature>
<feature type="binding site" evidence="1">
    <location>
        <position position="91"/>
    </location>
    <ligand>
        <name>ATP</name>
        <dbReference type="ChEBI" id="CHEBI:30616"/>
    </ligand>
</feature>
<feature type="binding site" evidence="1">
    <location>
        <position position="91"/>
    </location>
    <ligand>
        <name>CTP</name>
        <dbReference type="ChEBI" id="CHEBI:37563"/>
    </ligand>
</feature>
<feature type="binding site" evidence="1">
    <location>
        <position position="137"/>
    </location>
    <ligand>
        <name>ATP</name>
        <dbReference type="ChEBI" id="CHEBI:30616"/>
    </ligand>
</feature>
<feature type="binding site" evidence="1">
    <location>
        <position position="137"/>
    </location>
    <ligand>
        <name>CTP</name>
        <dbReference type="ChEBI" id="CHEBI:37563"/>
    </ligand>
</feature>
<feature type="binding site" evidence="1">
    <location>
        <position position="140"/>
    </location>
    <ligand>
        <name>ATP</name>
        <dbReference type="ChEBI" id="CHEBI:30616"/>
    </ligand>
</feature>
<feature type="binding site" evidence="1">
    <location>
        <position position="140"/>
    </location>
    <ligand>
        <name>CTP</name>
        <dbReference type="ChEBI" id="CHEBI:37563"/>
    </ligand>
</feature>
<accession>B5F6A0</accession>
<evidence type="ECO:0000255" key="1">
    <source>
        <dbReference type="HAMAP-Rule" id="MF_01261"/>
    </source>
</evidence>
<organism>
    <name type="scientific">Salmonella agona (strain SL483)</name>
    <dbReference type="NCBI Taxonomy" id="454166"/>
    <lineage>
        <taxon>Bacteria</taxon>
        <taxon>Pseudomonadati</taxon>
        <taxon>Pseudomonadota</taxon>
        <taxon>Gammaproteobacteria</taxon>
        <taxon>Enterobacterales</taxon>
        <taxon>Enterobacteriaceae</taxon>
        <taxon>Salmonella</taxon>
    </lineage>
</organism>
<proteinExistence type="inferred from homology"/>